<proteinExistence type="inferred from homology"/>
<dbReference type="EMBL" id="DQ851108">
    <property type="protein sequence ID" value="ABG91436.1"/>
    <property type="molecule type" value="Genomic_DNA"/>
</dbReference>
<dbReference type="RefSeq" id="YP_778604.1">
    <property type="nucleotide sequence ID" value="NC_008408.1"/>
</dbReference>
<dbReference type="SMR" id="Q06J23"/>
<dbReference type="GeneID" id="4353021"/>
<dbReference type="GO" id="GO:0009535">
    <property type="term" value="C:chloroplast thylakoid membrane"/>
    <property type="evidence" value="ECO:0007669"/>
    <property type="project" value="UniProtKB-SubCell"/>
</dbReference>
<dbReference type="GO" id="GO:0009539">
    <property type="term" value="C:photosystem II reaction center"/>
    <property type="evidence" value="ECO:0007669"/>
    <property type="project" value="InterPro"/>
</dbReference>
<dbReference type="GO" id="GO:0015979">
    <property type="term" value="P:photosynthesis"/>
    <property type="evidence" value="ECO:0007669"/>
    <property type="project" value="UniProtKB-UniRule"/>
</dbReference>
<dbReference type="HAMAP" id="MF_00808">
    <property type="entry name" value="PSII_PsbT"/>
    <property type="match status" value="1"/>
</dbReference>
<dbReference type="InterPro" id="IPR001743">
    <property type="entry name" value="PSII_PsbT"/>
</dbReference>
<dbReference type="InterPro" id="IPR037268">
    <property type="entry name" value="PSII_PsbT_sf"/>
</dbReference>
<dbReference type="PANTHER" id="PTHR36411">
    <property type="match status" value="1"/>
</dbReference>
<dbReference type="PANTHER" id="PTHR36411:SF2">
    <property type="entry name" value="PHOTOSYSTEM II REACTION CENTER PROTEIN T"/>
    <property type="match status" value="1"/>
</dbReference>
<dbReference type="Pfam" id="PF01405">
    <property type="entry name" value="PsbT"/>
    <property type="match status" value="1"/>
</dbReference>
<dbReference type="SUPFAM" id="SSF161029">
    <property type="entry name" value="Photosystem II reaction center protein T, PsbT"/>
    <property type="match status" value="1"/>
</dbReference>
<name>PSBT_BIGNA</name>
<comment type="function">
    <text evidence="1">Found at the monomer-monomer interface of the photosystem II (PS II) dimer, plays a role in assembly and dimerization of PSII. PSII is a light-driven water plastoquinone oxidoreductase, using light energy to abstract electrons from H(2)O, generating a proton gradient subsequently used for ATP formation.</text>
</comment>
<comment type="subunit">
    <text evidence="1">PSII is composed of 1 copy each of membrane proteins PsbA, PsbB, PsbC, PsbD, PsbE, PsbF, PsbH, PsbI, PsbJ, PsbK, PsbL, PsbM, PsbT, PsbY, PsbZ, Psb30/Ycf12, at least 3 peripheral proteins of the oxygen-evolving complex and a large number of cofactors. It forms dimeric complexes.</text>
</comment>
<comment type="subcellular location">
    <subcellularLocation>
        <location evidence="1">Plastid</location>
        <location evidence="1">Chloroplast thylakoid membrane</location>
        <topology evidence="1">Single-pass membrane protein</topology>
    </subcellularLocation>
</comment>
<comment type="similarity">
    <text evidence="1">Belongs to the PsbT family.</text>
</comment>
<geneLocation type="chloroplast"/>
<evidence type="ECO:0000255" key="1">
    <source>
        <dbReference type="HAMAP-Rule" id="MF_00808"/>
    </source>
</evidence>
<sequence>MEALVYTFLLVGTLGIIFFSIFFREPPRLLK</sequence>
<organism>
    <name type="scientific">Bigelowiella natans</name>
    <name type="common">Pedinomonas minutissima</name>
    <name type="synonym">Chlorarachnion sp. (strain CCMP621)</name>
    <dbReference type="NCBI Taxonomy" id="227086"/>
    <lineage>
        <taxon>Eukaryota</taxon>
        <taxon>Sar</taxon>
        <taxon>Rhizaria</taxon>
        <taxon>Cercozoa</taxon>
        <taxon>Chlorarachniophyceae</taxon>
        <taxon>Bigelowiella</taxon>
    </lineage>
</organism>
<feature type="chain" id="PRO_0000296329" description="Photosystem II reaction center protein T">
    <location>
        <begin position="1"/>
        <end position="31"/>
    </location>
</feature>
<feature type="transmembrane region" description="Helical" evidence="1">
    <location>
        <begin position="3"/>
        <end position="23"/>
    </location>
</feature>
<keyword id="KW-0150">Chloroplast</keyword>
<keyword id="KW-0472">Membrane</keyword>
<keyword id="KW-0602">Photosynthesis</keyword>
<keyword id="KW-0604">Photosystem II</keyword>
<keyword id="KW-0934">Plastid</keyword>
<keyword id="KW-0793">Thylakoid</keyword>
<keyword id="KW-0812">Transmembrane</keyword>
<keyword id="KW-1133">Transmembrane helix</keyword>
<gene>
    <name evidence="1" type="primary">psbT</name>
</gene>
<reference key="1">
    <citation type="journal article" date="2007" name="Mol. Biol. Evol.">
        <title>The complete chloroplast genome of the chlorarachniophyte Bigelowiella natans: evidence for independent origins of chlorarachniophyte and euglenid secondary endosymbionts.</title>
        <authorList>
            <person name="Rogers M.B."/>
            <person name="Gilson P.R."/>
            <person name="Su V."/>
            <person name="McFadden G.I."/>
            <person name="Keeling P.J."/>
        </authorList>
    </citation>
    <scope>NUCLEOTIDE SEQUENCE [LARGE SCALE GENOMIC DNA]</scope>
</reference>
<protein>
    <recommendedName>
        <fullName evidence="1">Photosystem II reaction center protein T</fullName>
        <shortName evidence="1">PSII-T</shortName>
    </recommendedName>
</protein>
<accession>Q06J23</accession>